<name>SWI6_PYRO7</name>
<accession>G4NID8</accession>
<organism>
    <name type="scientific">Pyricularia oryzae (strain 70-15 / ATCC MYA-4617 / FGSC 8958)</name>
    <name type="common">Rice blast fungus</name>
    <name type="synonym">Magnaporthe oryzae</name>
    <dbReference type="NCBI Taxonomy" id="242507"/>
    <lineage>
        <taxon>Eukaryota</taxon>
        <taxon>Fungi</taxon>
        <taxon>Dikarya</taxon>
        <taxon>Ascomycota</taxon>
        <taxon>Pezizomycotina</taxon>
        <taxon>Sordariomycetes</taxon>
        <taxon>Sordariomycetidae</taxon>
        <taxon>Magnaporthales</taxon>
        <taxon>Pyriculariaceae</taxon>
        <taxon>Pyricularia</taxon>
    </lineage>
</organism>
<comment type="function">
    <text evidence="4">Transcription factor that plays a role downstream of the MCK1-MKK2-MPS1 cascade (PubMed:22321443). Required for hyphal morphogenesis and pathogenicity (PubMed:22321443). Is an important oxidative stress response regulator and plays a positive role in the regulation of extracellular peroxidases (PubMed:22321443).</text>
</comment>
<comment type="subcellular location">
    <subcellularLocation>
        <location evidence="6">Nucleus</location>
    </subcellularLocation>
</comment>
<comment type="disruption phenotype">
    <text evidence="4">Leads to deformed and non-melanized appressoria that are unable to penetrate plant surface due to the impaired cell wall integrity (PubMed:22321443). Shows abnormal hyphae as a result of altered chitin synthesis (PubMed:22321443). Leads to sensitivity to H(2)O(2) (PubMed:22321443).</text>
</comment>
<gene>
    <name evidence="5" type="primary">SWI6</name>
    <name type="ORF">MGG_09869</name>
</gene>
<dbReference type="EMBL" id="CM001236">
    <property type="protein sequence ID" value="EHA47998.1"/>
    <property type="molecule type" value="Genomic_DNA"/>
</dbReference>
<dbReference type="RefSeq" id="XP_003720365.1">
    <property type="nucleotide sequence ID" value="XM_003720317.1"/>
</dbReference>
<dbReference type="SMR" id="G4NID8"/>
<dbReference type="STRING" id="242507.G4NID8"/>
<dbReference type="EnsemblFungi" id="MGG_09869T0">
    <property type="protein sequence ID" value="MGG_09869T0"/>
    <property type="gene ID" value="MGG_09869"/>
</dbReference>
<dbReference type="GeneID" id="2680826"/>
<dbReference type="KEGG" id="mgr:MGG_09869"/>
<dbReference type="VEuPathDB" id="FungiDB:MGG_09869"/>
<dbReference type="eggNOG" id="ENOG502QPWC">
    <property type="taxonomic scope" value="Eukaryota"/>
</dbReference>
<dbReference type="HOGENOM" id="CLU_009666_1_1_1"/>
<dbReference type="InParanoid" id="G4NID8"/>
<dbReference type="OMA" id="HHIAMMA"/>
<dbReference type="OrthoDB" id="6718656at2759"/>
<dbReference type="PHI-base" id="PHI:2987"/>
<dbReference type="Proteomes" id="UP000009058">
    <property type="component" value="Chromosome 6"/>
</dbReference>
<dbReference type="GO" id="GO:0030907">
    <property type="term" value="C:MBF transcription complex"/>
    <property type="evidence" value="ECO:0007669"/>
    <property type="project" value="TreeGrafter"/>
</dbReference>
<dbReference type="GO" id="GO:0033309">
    <property type="term" value="C:SBF transcription complex"/>
    <property type="evidence" value="ECO:0007669"/>
    <property type="project" value="TreeGrafter"/>
</dbReference>
<dbReference type="GO" id="GO:0003677">
    <property type="term" value="F:DNA binding"/>
    <property type="evidence" value="ECO:0007669"/>
    <property type="project" value="InterPro"/>
</dbReference>
<dbReference type="GO" id="GO:0001228">
    <property type="term" value="F:DNA-binding transcription activator activity, RNA polymerase II-specific"/>
    <property type="evidence" value="ECO:0007669"/>
    <property type="project" value="UniProtKB-ARBA"/>
</dbReference>
<dbReference type="GO" id="GO:0003713">
    <property type="term" value="F:transcription coactivator activity"/>
    <property type="evidence" value="ECO:0007669"/>
    <property type="project" value="TreeGrafter"/>
</dbReference>
<dbReference type="GO" id="GO:0048315">
    <property type="term" value="P:conidium formation"/>
    <property type="evidence" value="ECO:0007669"/>
    <property type="project" value="UniProtKB-KW"/>
</dbReference>
<dbReference type="GO" id="GO:0030435">
    <property type="term" value="P:sporulation resulting in formation of a cellular spore"/>
    <property type="evidence" value="ECO:0007669"/>
    <property type="project" value="UniProtKB-KW"/>
</dbReference>
<dbReference type="FunFam" id="3.10.260.10:FF:000001">
    <property type="entry name" value="APSES transcription factor (MbpA)"/>
    <property type="match status" value="1"/>
</dbReference>
<dbReference type="FunFam" id="1.25.40.20:FF:000365">
    <property type="entry name" value="Start control protein cdc10"/>
    <property type="match status" value="1"/>
</dbReference>
<dbReference type="Gene3D" id="1.25.40.20">
    <property type="entry name" value="Ankyrin repeat-containing domain"/>
    <property type="match status" value="1"/>
</dbReference>
<dbReference type="Gene3D" id="3.10.260.10">
    <property type="entry name" value="Transcription regulator HTH, APSES-type DNA-binding domain"/>
    <property type="match status" value="1"/>
</dbReference>
<dbReference type="InterPro" id="IPR002110">
    <property type="entry name" value="Ankyrin_rpt"/>
</dbReference>
<dbReference type="InterPro" id="IPR036770">
    <property type="entry name" value="Ankyrin_rpt-contain_sf"/>
</dbReference>
<dbReference type="InterPro" id="IPR036887">
    <property type="entry name" value="HTH_APSES_sf"/>
</dbReference>
<dbReference type="InterPro" id="IPR018004">
    <property type="entry name" value="KilA/APSES_HTH"/>
</dbReference>
<dbReference type="InterPro" id="IPR051642">
    <property type="entry name" value="SWI6-like"/>
</dbReference>
<dbReference type="InterPro" id="IPR003163">
    <property type="entry name" value="Tscrpt_reg_HTH_APSES-type"/>
</dbReference>
<dbReference type="PANTHER" id="PTHR43828">
    <property type="entry name" value="ASPARAGINASE"/>
    <property type="match status" value="1"/>
</dbReference>
<dbReference type="PANTHER" id="PTHR43828:SF3">
    <property type="entry name" value="CHROMO DOMAIN-CONTAINING PROTEIN"/>
    <property type="match status" value="1"/>
</dbReference>
<dbReference type="Pfam" id="PF13637">
    <property type="entry name" value="Ank_4"/>
    <property type="match status" value="1"/>
</dbReference>
<dbReference type="Pfam" id="PF04383">
    <property type="entry name" value="KilA-N"/>
    <property type="match status" value="1"/>
</dbReference>
<dbReference type="SMART" id="SM00248">
    <property type="entry name" value="ANK"/>
    <property type="match status" value="3"/>
</dbReference>
<dbReference type="SMART" id="SM01252">
    <property type="entry name" value="KilA-N"/>
    <property type="match status" value="1"/>
</dbReference>
<dbReference type="SUPFAM" id="SSF48403">
    <property type="entry name" value="Ankyrin repeat"/>
    <property type="match status" value="1"/>
</dbReference>
<dbReference type="SUPFAM" id="SSF54616">
    <property type="entry name" value="DNA-binding domain of Mlu1-box binding protein MBP1"/>
    <property type="match status" value="1"/>
</dbReference>
<dbReference type="PROSITE" id="PS50297">
    <property type="entry name" value="ANK_REP_REGION"/>
    <property type="match status" value="1"/>
</dbReference>
<dbReference type="PROSITE" id="PS50088">
    <property type="entry name" value="ANK_REPEAT"/>
    <property type="match status" value="2"/>
</dbReference>
<dbReference type="PROSITE" id="PS51299">
    <property type="entry name" value="HTH_APSES"/>
    <property type="match status" value="1"/>
</dbReference>
<keyword id="KW-0040">ANK repeat</keyword>
<keyword id="KW-0175">Coiled coil</keyword>
<keyword id="KW-0183">Conidiation</keyword>
<keyword id="KW-0539">Nucleus</keyword>
<keyword id="KW-1185">Reference proteome</keyword>
<keyword id="KW-0677">Repeat</keyword>
<keyword id="KW-0749">Sporulation</keyword>
<keyword id="KW-0804">Transcription</keyword>
<keyword id="KW-0805">Transcription regulation</keyword>
<keyword id="KW-0843">Virulence</keyword>
<proteinExistence type="evidence at protein level"/>
<protein>
    <recommendedName>
        <fullName evidence="5">Transcription factor SWI6</fullName>
    </recommendedName>
</protein>
<reference key="1">
    <citation type="journal article" date="2005" name="Nature">
        <title>The genome sequence of the rice blast fungus Magnaporthe grisea.</title>
        <authorList>
            <person name="Dean R.A."/>
            <person name="Talbot N.J."/>
            <person name="Ebbole D.J."/>
            <person name="Farman M.L."/>
            <person name="Mitchell T.K."/>
            <person name="Orbach M.J."/>
            <person name="Thon M.R."/>
            <person name="Kulkarni R."/>
            <person name="Xu J.-R."/>
            <person name="Pan H."/>
            <person name="Read N.D."/>
            <person name="Lee Y.-H."/>
            <person name="Carbone I."/>
            <person name="Brown D."/>
            <person name="Oh Y.Y."/>
            <person name="Donofrio N."/>
            <person name="Jeong J.S."/>
            <person name="Soanes D.M."/>
            <person name="Djonovic S."/>
            <person name="Kolomiets E."/>
            <person name="Rehmeyer C."/>
            <person name="Li W."/>
            <person name="Harding M."/>
            <person name="Kim S."/>
            <person name="Lebrun M.-H."/>
            <person name="Bohnert H."/>
            <person name="Coughlan S."/>
            <person name="Butler J."/>
            <person name="Calvo S.E."/>
            <person name="Ma L.-J."/>
            <person name="Nicol R."/>
            <person name="Purcell S."/>
            <person name="Nusbaum C."/>
            <person name="Galagan J.E."/>
            <person name="Birren B.W."/>
        </authorList>
    </citation>
    <scope>NUCLEOTIDE SEQUENCE [LARGE SCALE GENOMIC DNA]</scope>
    <source>
        <strain>70-15 / ATCC MYA-4617 / FGSC 8958</strain>
    </source>
</reference>
<reference key="2">
    <citation type="journal article" date="2012" name="Mol. Plant Pathol.">
        <title>MoSwi6, an APSES family transcription factor, interacts with MoMps1 and is required for hyphal and conidial morphogenesis, appressorial function and pathogenicity of Magnaporthe oryzae.</title>
        <authorList>
            <person name="Qi Z."/>
            <person name="Wang Q."/>
            <person name="Dou X."/>
            <person name="Wang W."/>
            <person name="Zhao Q."/>
            <person name="Lv R."/>
            <person name="Zhang H."/>
            <person name="Zheng X."/>
            <person name="Wang P."/>
            <person name="Zhang Z."/>
        </authorList>
    </citation>
    <scope>FUNCTION</scope>
    <scope>DISRUPTION PHENOTYPE</scope>
    <scope>INTERACTION WITH MPS1</scope>
</reference>
<feature type="chain" id="PRO_0000453104" description="Transcription factor SWI6">
    <location>
        <begin position="1"/>
        <end position="895"/>
    </location>
</feature>
<feature type="domain" description="HTH APSES-type" evidence="2">
    <location>
        <begin position="112"/>
        <end position="219"/>
    </location>
</feature>
<feature type="repeat" description="ANK 1" evidence="1">
    <location>
        <begin position="458"/>
        <end position="488"/>
    </location>
</feature>
<feature type="repeat" description="ANK 2" evidence="1">
    <location>
        <begin position="607"/>
        <end position="636"/>
    </location>
</feature>
<feature type="DNA-binding region" description="H-T-H motif" evidence="2">
    <location>
        <begin position="143"/>
        <end position="164"/>
    </location>
</feature>
<feature type="region of interest" description="Disordered" evidence="3">
    <location>
        <begin position="1"/>
        <end position="107"/>
    </location>
</feature>
<feature type="region of interest" description="Disordered" evidence="3">
    <location>
        <begin position="272"/>
        <end position="293"/>
    </location>
</feature>
<feature type="region of interest" description="Disordered" evidence="3">
    <location>
        <begin position="323"/>
        <end position="358"/>
    </location>
</feature>
<feature type="region of interest" description="Disordered" evidence="3">
    <location>
        <begin position="653"/>
        <end position="684"/>
    </location>
</feature>
<feature type="coiled-coil region" evidence="1">
    <location>
        <begin position="698"/>
        <end position="759"/>
    </location>
</feature>
<feature type="compositionally biased region" description="Polar residues" evidence="3">
    <location>
        <begin position="1"/>
        <end position="45"/>
    </location>
</feature>
<feature type="compositionally biased region" description="Low complexity" evidence="3">
    <location>
        <begin position="64"/>
        <end position="100"/>
    </location>
</feature>
<feature type="compositionally biased region" description="Polar residues" evidence="3">
    <location>
        <begin position="674"/>
        <end position="684"/>
    </location>
</feature>
<evidence type="ECO:0000255" key="1"/>
<evidence type="ECO:0000255" key="2">
    <source>
        <dbReference type="PROSITE-ProRule" id="PRU00630"/>
    </source>
</evidence>
<evidence type="ECO:0000256" key="3">
    <source>
        <dbReference type="SAM" id="MobiDB-lite"/>
    </source>
</evidence>
<evidence type="ECO:0000269" key="4">
    <source>
    </source>
</evidence>
<evidence type="ECO:0000303" key="5">
    <source>
    </source>
</evidence>
<evidence type="ECO:0000305" key="6">
    <source>
    </source>
</evidence>
<sequence length="895" mass="97714">MASTVAGNSFVSQQHPGNLHSANLQSQSQGFRRQNSTSSVPSTASFDPPNGSIANTGSQKHHPMSSQQSQPPASQQSFSMSQTGSQPQPSQSSFRSYSDQNVPQQPQEASPIYTAVYSNVEVYEFEVNGVAVMKRIGDSKLNATQILKVAGVEKGKRTKILEKEIQTGEHEKVQGGYGKYQGTWIKYERALEVCRQYGVEELLRPLLEYNRNPDGSVSQANLNTPTKEQAMAAQRKKMYNSGADSRNNNGGGTFFKNISQTAHSAMTAISKARFDSPGPRGRNGPTRAPSFQRQLSTQSIDDFHGGNSQASNFAENFPPQDVNMAFSAGSEPQPGGLNGTEPPRKRQRMDMTPANSFGAYANNSQMQAYADAFPGSPTEPNDSFIYTQHAAANDTLLQQQHDQQTPLQPLPYEQSVEAENKRSMLMSIFMNDGMSEQARVDTLRQIHPRDLDMPIDSQCHTALHWAATLSRMTILRRLIEAGASPFRVNTSGETPLMRACIVTNSHDNDSMPAILDILGNTMEVRDSKERTVLHHIALTSAVSGRSAASRYYLQCLLGWVVRQGAANGGQLNSQTFNGGATVSQSQNATRLDLGRFMSEMLNAQDSAGDTALNIAARIGNRSIISQLLEVCASPHIANRSGLRPTDFGIGVDSDGAMKTKGDSGGDVENGDVGGSSQKSNESSNEIVTSITHLLTETSANFQEEIKNKQKNIDSLHATLRLTTTDVNDLRRKLDEAQARVKAQQLARQKVTNLQRAEERERYRLTQLEQTTGRRDIASANGWEAESNTLLATINATTNGEPDADAKLPSSALLRARIEAVKKQTESTRQSVVALKGRSREVEGRYRHLVALATKCRDEDVDSTMEGLLKAVESEKGELEIGRVRRFLGGVEGVIG</sequence>